<protein>
    <recommendedName>
        <fullName evidence="1">N-acetylmannosamine kinase</fullName>
        <ecNumber evidence="1">2.7.1.60</ecNumber>
    </recommendedName>
    <alternativeName>
        <fullName evidence="1">ManNAc kinase</fullName>
    </alternativeName>
    <alternativeName>
        <fullName evidence="1">N-acetyl-D-mannosamine kinase</fullName>
    </alternativeName>
</protein>
<reference key="1">
    <citation type="journal article" date="2003" name="Genome Res.">
        <title>Comparative genome analysis of Vibrio vulnificus, a marine pathogen.</title>
        <authorList>
            <person name="Chen C.-Y."/>
            <person name="Wu K.-M."/>
            <person name="Chang Y.-C."/>
            <person name="Chang C.-H."/>
            <person name="Tsai H.-C."/>
            <person name="Liao T.-L."/>
            <person name="Liu Y.-M."/>
            <person name="Chen H.-J."/>
            <person name="Shen A.B.-T."/>
            <person name="Li J.-C."/>
            <person name="Su T.-L."/>
            <person name="Shao C.-P."/>
            <person name="Lee C.-T."/>
            <person name="Hor L.-I."/>
            <person name="Tsai S.-F."/>
        </authorList>
    </citation>
    <scope>NUCLEOTIDE SEQUENCE [LARGE SCALE GENOMIC DNA]</scope>
    <source>
        <strain>YJ016</strain>
    </source>
</reference>
<gene>
    <name evidence="1" type="primary">nanK</name>
    <name type="ordered locus">VVA1205</name>
</gene>
<organism>
    <name type="scientific">Vibrio vulnificus (strain YJ016)</name>
    <dbReference type="NCBI Taxonomy" id="196600"/>
    <lineage>
        <taxon>Bacteria</taxon>
        <taxon>Pseudomonadati</taxon>
        <taxon>Pseudomonadota</taxon>
        <taxon>Gammaproteobacteria</taxon>
        <taxon>Vibrionales</taxon>
        <taxon>Vibrionaceae</taxon>
        <taxon>Vibrio</taxon>
    </lineage>
</organism>
<sequence>MKVLAIDIGGTKIALGNVVEGHLQHRKQFPTPVVNDATTLAKEILAHCQAWLSDVDVIGISTTGLVSEQGISAINPGTLSFPTPFPLHSELHRLSGKPVKMLNDAQAAAWYEFLQLSPELDVRNMAYITVSTGVGGGLVINQQLHKGKSNFAGHIGHTVLDPNGPLCGCQQRGCVEAIASGNAINAGAQALFGQAISNIELFQLAQHNEQASALIQQSAEAIAQLCLNLKATLDLDLVVIGGGVGLAHGYLARVQAFIDKQPLVFQVKVRAAVGDYDACLLGAAFQFEESNLS</sequence>
<feature type="chain" id="PRO_0000095706" description="N-acetylmannosamine kinase">
    <location>
        <begin position="1"/>
        <end position="293"/>
    </location>
</feature>
<feature type="binding site" evidence="1">
    <location>
        <begin position="5"/>
        <end position="12"/>
    </location>
    <ligand>
        <name>ATP</name>
        <dbReference type="ChEBI" id="CHEBI:30616"/>
    </ligand>
</feature>
<feature type="binding site" evidence="1">
    <location>
        <begin position="133"/>
        <end position="140"/>
    </location>
    <ligand>
        <name>ATP</name>
        <dbReference type="ChEBI" id="CHEBI:30616"/>
    </ligand>
</feature>
<feature type="binding site" evidence="1">
    <location>
        <position position="157"/>
    </location>
    <ligand>
        <name>Zn(2+)</name>
        <dbReference type="ChEBI" id="CHEBI:29105"/>
    </ligand>
</feature>
<feature type="binding site" evidence="1">
    <location>
        <position position="167"/>
    </location>
    <ligand>
        <name>Zn(2+)</name>
        <dbReference type="ChEBI" id="CHEBI:29105"/>
    </ligand>
</feature>
<feature type="binding site" evidence="1">
    <location>
        <position position="169"/>
    </location>
    <ligand>
        <name>Zn(2+)</name>
        <dbReference type="ChEBI" id="CHEBI:29105"/>
    </ligand>
</feature>
<feature type="binding site" evidence="1">
    <location>
        <position position="174"/>
    </location>
    <ligand>
        <name>Zn(2+)</name>
        <dbReference type="ChEBI" id="CHEBI:29105"/>
    </ligand>
</feature>
<keyword id="KW-0067">ATP-binding</keyword>
<keyword id="KW-0119">Carbohydrate metabolism</keyword>
<keyword id="KW-0418">Kinase</keyword>
<keyword id="KW-0479">Metal-binding</keyword>
<keyword id="KW-0547">Nucleotide-binding</keyword>
<keyword id="KW-0808">Transferase</keyword>
<keyword id="KW-0862">Zinc</keyword>
<dbReference type="EC" id="2.7.1.60" evidence="1"/>
<dbReference type="EMBL" id="BA000038">
    <property type="protein sequence ID" value="BAC97231.1"/>
    <property type="molecule type" value="Genomic_DNA"/>
</dbReference>
<dbReference type="RefSeq" id="WP_011152459.1">
    <property type="nucleotide sequence ID" value="NC_005140.1"/>
</dbReference>
<dbReference type="SMR" id="Q7MD31"/>
<dbReference type="STRING" id="672.VV93_v1c41310"/>
<dbReference type="KEGG" id="vvy:VVA1205"/>
<dbReference type="PATRIC" id="fig|196600.6.peg.4359"/>
<dbReference type="eggNOG" id="COG1940">
    <property type="taxonomic scope" value="Bacteria"/>
</dbReference>
<dbReference type="HOGENOM" id="CLU_036604_0_4_6"/>
<dbReference type="UniPathway" id="UPA00629">
    <property type="reaction ID" value="UER00681"/>
</dbReference>
<dbReference type="Proteomes" id="UP000002675">
    <property type="component" value="Chromosome II"/>
</dbReference>
<dbReference type="GO" id="GO:0005524">
    <property type="term" value="F:ATP binding"/>
    <property type="evidence" value="ECO:0007669"/>
    <property type="project" value="UniProtKB-UniRule"/>
</dbReference>
<dbReference type="GO" id="GO:0009384">
    <property type="term" value="F:N-acylmannosamine kinase activity"/>
    <property type="evidence" value="ECO:0007669"/>
    <property type="project" value="UniProtKB-UniRule"/>
</dbReference>
<dbReference type="GO" id="GO:0008270">
    <property type="term" value="F:zinc ion binding"/>
    <property type="evidence" value="ECO:0007669"/>
    <property type="project" value="UniProtKB-UniRule"/>
</dbReference>
<dbReference type="GO" id="GO:0019262">
    <property type="term" value="P:N-acetylneuraminate catabolic process"/>
    <property type="evidence" value="ECO:0007669"/>
    <property type="project" value="UniProtKB-UniRule"/>
</dbReference>
<dbReference type="Gene3D" id="3.30.420.40">
    <property type="match status" value="2"/>
</dbReference>
<dbReference type="HAMAP" id="MF_01234">
    <property type="entry name" value="ManNAc_kinase"/>
    <property type="match status" value="1"/>
</dbReference>
<dbReference type="InterPro" id="IPR043129">
    <property type="entry name" value="ATPase_NBD"/>
</dbReference>
<dbReference type="InterPro" id="IPR023945">
    <property type="entry name" value="ManNAc_kinase_bac"/>
</dbReference>
<dbReference type="InterPro" id="IPR000600">
    <property type="entry name" value="ROK"/>
</dbReference>
<dbReference type="InterPro" id="IPR049874">
    <property type="entry name" value="ROK_cs"/>
</dbReference>
<dbReference type="NCBIfam" id="NF003461">
    <property type="entry name" value="PRK05082.1"/>
    <property type="match status" value="1"/>
</dbReference>
<dbReference type="PANTHER" id="PTHR18964:SF169">
    <property type="entry name" value="N-ACETYLMANNOSAMINE KINASE"/>
    <property type="match status" value="1"/>
</dbReference>
<dbReference type="PANTHER" id="PTHR18964">
    <property type="entry name" value="ROK (REPRESSOR, ORF, KINASE) FAMILY"/>
    <property type="match status" value="1"/>
</dbReference>
<dbReference type="Pfam" id="PF00480">
    <property type="entry name" value="ROK"/>
    <property type="match status" value="1"/>
</dbReference>
<dbReference type="SUPFAM" id="SSF53067">
    <property type="entry name" value="Actin-like ATPase domain"/>
    <property type="match status" value="1"/>
</dbReference>
<dbReference type="PROSITE" id="PS01125">
    <property type="entry name" value="ROK"/>
    <property type="match status" value="1"/>
</dbReference>
<name>NANK_VIBVY</name>
<evidence type="ECO:0000255" key="1">
    <source>
        <dbReference type="HAMAP-Rule" id="MF_01234"/>
    </source>
</evidence>
<proteinExistence type="inferred from homology"/>
<comment type="function">
    <text evidence="1">Catalyzes the phosphorylation of N-acetylmannosamine (ManNAc) to ManNAc-6-P.</text>
</comment>
<comment type="catalytic activity">
    <reaction evidence="1">
        <text>an N-acyl-D-mannosamine + ATP = an N-acyl-D-mannosamine 6-phosphate + ADP + H(+)</text>
        <dbReference type="Rhea" id="RHEA:23832"/>
        <dbReference type="ChEBI" id="CHEBI:15378"/>
        <dbReference type="ChEBI" id="CHEBI:16062"/>
        <dbReference type="ChEBI" id="CHEBI:30616"/>
        <dbReference type="ChEBI" id="CHEBI:57666"/>
        <dbReference type="ChEBI" id="CHEBI:456216"/>
        <dbReference type="EC" id="2.7.1.60"/>
    </reaction>
</comment>
<comment type="pathway">
    <text evidence="1">Amino-sugar metabolism; N-acetylneuraminate degradation; D-fructose 6-phosphate from N-acetylneuraminate: step 2/5.</text>
</comment>
<comment type="subunit">
    <text evidence="1">Homodimer.</text>
</comment>
<comment type="similarity">
    <text evidence="1">Belongs to the ROK (NagC/XylR) family. NanK subfamily.</text>
</comment>
<accession>Q7MD31</accession>